<evidence type="ECO:0000250" key="1"/>
<evidence type="ECO:0000250" key="2">
    <source>
        <dbReference type="UniProtKB" id="P02340"/>
    </source>
</evidence>
<evidence type="ECO:0000250" key="3">
    <source>
        <dbReference type="UniProtKB" id="P04637"/>
    </source>
</evidence>
<evidence type="ECO:0000250" key="4">
    <source>
        <dbReference type="UniProtKB" id="P10361"/>
    </source>
</evidence>
<evidence type="ECO:0000256" key="5">
    <source>
        <dbReference type="SAM" id="MobiDB-lite"/>
    </source>
</evidence>
<evidence type="ECO:0000305" key="6"/>
<organism>
    <name type="scientific">Macaca mulatta</name>
    <name type="common">Rhesus macaque</name>
    <dbReference type="NCBI Taxonomy" id="9544"/>
    <lineage>
        <taxon>Eukaryota</taxon>
        <taxon>Metazoa</taxon>
        <taxon>Chordata</taxon>
        <taxon>Craniata</taxon>
        <taxon>Vertebrata</taxon>
        <taxon>Euteleostomi</taxon>
        <taxon>Mammalia</taxon>
        <taxon>Eutheria</taxon>
        <taxon>Euarchontoglires</taxon>
        <taxon>Primates</taxon>
        <taxon>Haplorrhini</taxon>
        <taxon>Catarrhini</taxon>
        <taxon>Cercopithecidae</taxon>
        <taxon>Cercopithecinae</taxon>
        <taxon>Macaca</taxon>
    </lineage>
</organism>
<gene>
    <name type="primary">TP53</name>
    <name type="synonym">P53</name>
</gene>
<proteinExistence type="evidence at transcript level"/>
<keyword id="KW-0007">Acetylation</keyword>
<keyword id="KW-0010">Activator</keyword>
<keyword id="KW-0053">Apoptosis</keyword>
<keyword id="KW-0090">Biological rhythms</keyword>
<keyword id="KW-0131">Cell cycle</keyword>
<keyword id="KW-0963">Cytoplasm</keyword>
<keyword id="KW-0206">Cytoskeleton</keyword>
<keyword id="KW-0238">DNA-binding</keyword>
<keyword id="KW-0256">Endoplasmic reticulum</keyword>
<keyword id="KW-1017">Isopeptide bond</keyword>
<keyword id="KW-0479">Metal-binding</keyword>
<keyword id="KW-0488">Methylation</keyword>
<keyword id="KW-0496">Mitochondrion</keyword>
<keyword id="KW-1210">Necrosis</keyword>
<keyword id="KW-0539">Nucleus</keyword>
<keyword id="KW-0597">Phosphoprotein</keyword>
<keyword id="KW-1185">Reference proteome</keyword>
<keyword id="KW-0678">Repressor</keyword>
<keyword id="KW-0804">Transcription</keyword>
<keyword id="KW-0805">Transcription regulation</keyword>
<keyword id="KW-0043">Tumor suppressor</keyword>
<keyword id="KW-0832">Ubl conjugation</keyword>
<keyword id="KW-0862">Zinc</keyword>
<protein>
    <recommendedName>
        <fullName>Cellular tumor antigen p53</fullName>
    </recommendedName>
    <alternativeName>
        <fullName>Tumor suppressor p53</fullName>
    </alternativeName>
</protein>
<name>P53_MACMU</name>
<comment type="function">
    <text evidence="2 3">Multifunctional transcription factor that induces cell cycle arrest, DNA repair or apoptosis upon binding to its target DNA sequence. Acts as a tumor suppressor in many tumor types; induces growth arrest or apoptosis depending on the physiological circumstances and cell type. Negatively regulates cell division by controlling expression of a set of genes required for this process. One of the activated genes is an inhibitor of cyclin-dependent kinases. Apoptosis induction seems to be mediated either by stimulation of BAX and FAS antigen expression, or by repression of Bcl-2 expression. Its pro-apoptotic activity is activated via its interaction with PPP1R13B/ASPP1 or TP53BP2/ASPP2 (By similarity). However, this activity is inhibited when the interaction with PPP1R13B/ASPP1 or TP53BP2/ASPP2 is displaced by PPP1R13L/iASPP (By similarity). In cooperation with mitochondrial PPIF is involved in activating oxidative stress-induced necrosis; the function is largely independent of transcription. Prevents CDK7 kinase activity when associated to CAK complex in response to DNA damage, thus stopping cell cycle progression. Induces the transcription of long intergenic non-coding RNA p21 (lincRNA-p21) and lincRNA-Mkln1. LincRNA-p21 participates in TP53-dependent transcriptional repression leading to apoptosis and seems to have an effect on cell-cycle regulation. Regulates the circadian clock by repressing CLOCK-BMAL1-mediated transcriptional activation of PER2.</text>
</comment>
<comment type="cofactor">
    <cofactor evidence="1">
        <name>Zn(2+)</name>
        <dbReference type="ChEBI" id="CHEBI:29105"/>
    </cofactor>
    <text evidence="1">Binds 1 zinc ion per subunit.</text>
</comment>
<comment type="subunit">
    <text evidence="2 3 4">Forms homodimers and homotetramers (By similarity). Binds DNA as a homotetramer. Interacts with AXIN1. Probably part of a complex consisting of TP53, HIPK2 and AXIN1. Interacts with histone acetyltransferases EP300 and methyltransferases HRMT1L2 and CARM1, and recruits them to promoters. Interacts (via C-terminus) with TAF1; when TAF1 is part of the TFIID complex. Interacts with ING4; this interaction may be indirect. Found in a complex with CABLES1 and TP73. Interacts with HIPK1, HIPK2, and TP53INP1. Interacts with WWOX. Interacts with USP7 and SYVN1. Interacts with HSP90AB1. Interacts with CHD8; leading to recruit histone H1 and prevent transactivation activity. Interacts with ARMC10, BANP, CDKN2AIP, NUAK1, STK11/LKB1, UHRF2 and E4F. Interacts with YWHAZ; the interaction enhances TP53 transcriptional activity. Phosphorylation of YWHAZ on 'Ser-58' inhibits this interaction. Interacts (via DNA-binding domain) with MAML1 (via N-terminus). Interacts with MKRN1. Interacts with PML (via C-terminus). Interacts with MDM2; leading to ubiquitination and proteasomal degradation of TP53. Directly interacts with FBXO42; leading to ubiquitination and degradation of TP53. Interacts (phosphorylated at Ser-15 by ATM) with the phosphatase PP2A-PPP2R5C holoenzyme; regulates stress-induced TP53-dependent inhibition of cell proliferation. Interacts with PPP2R2A. Interacts with AURKA, DAXX, BRD7 and TRIM24. Interacts (when monomethylated at Lys-382) with L3MBTL1. Interacts with GRK5. Binds to the CAK complex (CDK7, cyclin H and MAT1) in response to DNA damage. Interacts with CDK5 in neurons. Interacts with AURKB, SETD2, UHRF2 and NOC2L. Interacts (via N-terminus) with PTK2/FAK1; this promotes ubiquitination by MDM2. Interacts with PTK2B/PYK2; this promotes ubiquitination by MDM2. Interacts with PRKCG. Interacts with PPIF; the association implicates preferentially tetrameric TP53, is induced by oxidative stress and is impaired by cyclosporin A (CsA). Interacts with SNAI1; the interaction induces SNAI1 degradation via MDM2-mediated ubiquitination and inhibits SNAI1-induced cell invasion. Interacts with UBC9. Interacts with ZNF385B; the interaction is direct. Interacts (via DNA-binding domain) with ZNF385A; the interaction is direct and enhances p53/TP53 transactivation functions on cell-cycle arrest target genes, resulting in growth arrest (By similarity). Interacts with ANKRD2. Interacts with RFFL and RNF34; involved in p53/TP53 ubiquitination. Interacts with MTA1 and COP1. Interacts with CCAR2 (via N-terminus). Interacts with MORC3. Interacts (via C-terminus) with POU4F2 (via C-terminus). Interacts (via oligomerization region) with NOP53; the interaction is direct and may prevent the MDM2-mediated proteasomal degradation of TP53. Interacts with AFG1L; mediates mitochondrial translocation of TP53. Interacts with UBD (By similarity). Interacts with TAF6 (By similarity). Interacts with C10orf90/FATS; the interaction inhibits binding of TP53 and MDM2 (By similarity). Interacts with NUPR1; interaction is stress-dependent. Forms a complex with EP300 and NUPR1; this complex binds CDKN1A promoter leading to transcriptional induction of CDKN1A (By similarity). Interacts with PRMT5 in response to DNA damage; the interaction is TTC5/STRAP dependent (By similarity). Interacts with PPP1R13L (via SH3 domain and ANK repeats); the interaction inhibits pro-apoptotic activity of p53/TP53 (By similarity). Interacts with PPP1R13B/ASPP1 and TP53BP2/ASPP2; the interactions promotes pro-apoptotic activity (By similarity). When phosphorylated at Ser-15, interacts with DDX3X and gamma-tubulin (By similarity). Interacts with KAT7/HBO1; leading to inhibit histone acetyltransferase activity of KAT7/HBO1 (By similarity). Interacts (via N-terminus) with E3 ubiquitin-protein ligase MUL1; the interaction results in ubiquitination of cytoplasmic TP53 at Lys-24 and subsequent proteasomal degradation (By similarity). Interacts with S100A4; this interaction promotes TP53 degradation (By similarity). Interacts with TTC5/STRAP; the interaction may result in increased mitochondrial-dependent apoptosis (By similarity). Interacts with NQO1; this interaction is NADH-dependent, stabilizes TP53 in response to oxidative stress and protects it from ubiquitin-independent degradation by the 20S proteasome (By similarity). Interacts with DAZAP2 at TP53 target gene promoters; the interaction is triggered by DNA damage and leads to modulation of the expression of a subset of TP53 target genes, reducing DNA damage-induced cell death by limiting the expression of cell death-mediating TP53 target genes (By similarity). Interacts (via N-terminus) with ZNF768 (via zinc-finger domains); interaction might be facilitated by TP53 oligomerization state (By similarity). Forms a ternary complex with ALDOB and G6PD; this interaction is direct. ALDOB stabilizes the complex inhibiting G6PD activity and keeping oxidative pentose phosphate metabolism in check. Interacts with MORN3; the interactions mediate post-transcriptional modifications of TP53 by MDM2 and SIRT1 (By similarity). Interacts with HSPA9/MOT-2; the interaction promotes the degradation of TP53 (By similarity).</text>
</comment>
<comment type="subcellular location">
    <subcellularLocation>
        <location evidence="3">Cytoplasm</location>
    </subcellularLocation>
    <subcellularLocation>
        <location evidence="3">Nucleus</location>
    </subcellularLocation>
    <subcellularLocation>
        <location evidence="3">Nucleus</location>
        <location evidence="3">PML body</location>
    </subcellularLocation>
    <subcellularLocation>
        <location evidence="3">Endoplasmic reticulum</location>
    </subcellularLocation>
    <subcellularLocation>
        <location evidence="3">Mitochondrion matrix</location>
    </subcellularLocation>
    <subcellularLocation>
        <location evidence="3">Cytoplasm</location>
        <location evidence="3">Cytoskeleton</location>
        <location evidence="3">Microtubule organizing center</location>
        <location evidence="3">Centrosome</location>
    </subcellularLocation>
    <text evidence="3">Interaction with BANP promotes nuclear localization. Recruited into PML bodies together with CHEK2. Translocates to mitochondria upon oxidative stress. Translocates to mitochondria in response to mitomycin C treatment (By similarity). Competitive inhibition of TP53 interaction with HSPA9/MOT-2 by UBXN2A results in increased protein abundance and subsequent translocation of TP53 to the nucleus (By similarity).</text>
</comment>
<comment type="domain">
    <text evidence="3">The N-terminal and C-terminal disordered regions undergo liquid-liquid phase separation (LLPS) following homotetramerization and activation. Post-translational modifications, such as phosphorylation or lactylation affect the ability to undergo LLPS.</text>
</comment>
<comment type="domain">
    <text evidence="3">The nuclear export signal acts as a transcriptional repression domain. The TADI and TADII motifs (residues 17 to 25 and 48 to 56) correspond both to 9aaTAD motifs which are transactivation domains present in a large number of yeast and animal transcription factors.</text>
</comment>
<comment type="PTM">
    <text evidence="1 3">Phosphorylation on Ser residues mediates transcriptional activation. Phosphorylation at Ser-9 by HIPK4 increases repression activity on BIRC5 promoter (By similarity). Phosphorylated on Thr-18 by VRK1, which may prevent the interaction with MDM2. Phosphorylated on Ser-20 by CHEK2 in response to DNA damage, which prevents ubiquitination by MDM2. Phosphorylated on Ser-20 by PLK3 in response to reactive oxygen species (ROS), promoting p53/TP53-mediated apoptosis. Phosphorylated on Thr-55 by TAF1 which promotes MDM2-mediated TP53 degradation. Phosphorylated on Ser-33 by CDK7 in a CAK complex in response to DNA damage. Phosphorylated by HIPK1. Phosphorylated on Ser-46 by HIPK2 upon UV irradiation. Phosphorylation on Ser-46 is required for acetylation by CREBBP. Phosphorylated on Ser-392 following UV but not gamma irradiation. Stabilized by CDK5-mediated phosphorylation in response to genotoxic and oxidative stresses at Ser-15, Ser-33 and Ser-46, leading to accumulation of p53/TP53, particularly in the nucleus, thus inducing the transactivation of p53/TP53 target genes. Phosphorylated by DYRK2 at Ser-46 in response to genotoxic stress. Phosphorylated at Ser-315 and Ser-392 by CDK2 in response to DNA-damage (By similarity). Phosphorylation at Ser-15 is required for interaction with DDX3X and gamma-tubulin (By similarity). Phosphorylation at Ser-392 regulates its ability to undergo liquid-liquid phase separation by increasing fluidity of TP53/p53 condensates (By similarity).</text>
</comment>
<comment type="PTM">
    <text evidence="3">Monomethylated at Lys-372 by SETD7, leading to stabilization and increased transcriptional activation. Monomethylated at Lys-370 by SMYD2, leading to decreased DNA-binding activity and subsequent transcriptional regulation activity. Lys-372 monomethylation prevents interaction with SMYD2 and subsequent monomethylation at Lys-370. Dimethylated at Lys-373 by EHMT1 and EHMT2. Monomethylated at Lys-382 by KMT5A, promoting interaction with L3MBTL1 and leading to repress transcriptional activity. Demethylation of dimethylated Lys-370 by KDM1A prevents interaction with TP53BP1 and represses TP53-mediated transcriptional activation (By similarity). Monomethylated at Arg-333 and dimethylated at Arg-335 and Arg-337 by PRMT5; methylation is increased after DNA damage and might possibly affect TP53 target gene specificity (By similarity).</text>
</comment>
<comment type="PTM">
    <text evidence="1">Sumoylated with SUMO1. Sumoylated at Lys-386 by UBC9 (By similarity).</text>
</comment>
<comment type="PTM">
    <text evidence="2 3">Ubiquitinated by MDM2 and SYVN1, which leads to proteasomal degradation. Ubiquitinated by RFWD3, which works in cooperation with MDM2 and may catalyze the formation of short polyubiquitin chains on p53/TP53 that are not targeted to the proteasome. Ubiquitinated by MKRN1, which leads to proteasomal degradation. Deubiquitinated by USP10, leading to stabilize it. Ubiquitinated by TRIM24, RFFL, RNF34 and RNF125, which leads to proteasomal degradation. Ubiquitination by TOPORS induces degradation. Deubiquitination by USP7, leading to stabilize it. Ubiquitinated by COP1, which leads to proteasomal degradation (By similarity). Ubiquitination and subsequent proteasomal degradation is negatively regulated by CCAR2 (By similarity). Polyubiquitinated by C10orf90/FATS, polyubiquitination is 'Lys-48'-linkage independent and non-proteolytic, leading to TP53 stabilization (By similarity). Polyubiquitinated by MUL1 at Lys-24 which leads to proteasomal degradation (By similarity). Deubiquitinated by USP3, leading to stabilization (By similarity). Ubiquitinated by MSL2, promoting its cytoplasmic localization (By similarity). Also ubiquitinated by the SCF(FBXO22)-KDMA4A complex; leading to proteasomal degradation (By similarity).</text>
</comment>
<comment type="PTM">
    <text evidence="3">Acetylation of Lys-382 by CREBBP enhances transcriptional activity. Acetylation of Lys-382 by EP300. Deacetylation of Lys-382 by SIRT1 impairs its ability to induce proapoptotic program and modulate cell senescence. Deacetylation by SIRT2 impairs its ability to induce transcription activation in a AKT-dependent manner. Acetylation at Lys-381 increases stability. Deacetylation at Lys-381 by SIRT6 decreases its stability, thereby regulating cell senescence. Acetylated at Lys-120 by KAT5, KAT6A and KAT8; regulating its ability to induce proapoptotic program.</text>
</comment>
<comment type="PTM">
    <text evidence="3">Lactylation by AARS1 prevents ability to undergo liquid-liquid phase separation (LLPS), thereby inhibiting transcription factor activity.</text>
</comment>
<comment type="disease">
    <text>p53 is found in increased amounts in a wide variety of transformed cells. p53 is frequently mutated or inactivated in many types of cancer.</text>
</comment>
<comment type="similarity">
    <text evidence="6">Belongs to the p53 family.</text>
</comment>
<feature type="chain" id="PRO_0000185706" description="Cellular tumor antigen p53">
    <location>
        <begin position="1"/>
        <end position="393"/>
    </location>
</feature>
<feature type="DNA-binding region" evidence="3">
    <location>
        <begin position="102"/>
        <end position="292"/>
    </location>
</feature>
<feature type="region of interest" description="Interaction with CCAR2" evidence="3">
    <location>
        <begin position="1"/>
        <end position="320"/>
    </location>
</feature>
<feature type="region of interest" description="Interaction with HRMT1L2" evidence="1">
    <location>
        <begin position="1"/>
        <end position="83"/>
    </location>
</feature>
<feature type="region of interest" description="Transcription activation (acidic)">
    <location>
        <begin position="1"/>
        <end position="44"/>
    </location>
</feature>
<feature type="region of interest" description="Disordered" evidence="5">
    <location>
        <begin position="48"/>
        <end position="97"/>
    </location>
</feature>
<feature type="region of interest" description="Interaction with WWOX" evidence="1">
    <location>
        <begin position="66"/>
        <end position="110"/>
    </location>
</feature>
<feature type="region of interest" description="Interaction with HIPK1" evidence="1">
    <location>
        <begin position="100"/>
        <end position="370"/>
    </location>
</feature>
<feature type="region of interest" description="Required for interaction with ZNF385A" evidence="1">
    <location>
        <begin position="100"/>
        <end position="300"/>
    </location>
</feature>
<feature type="region of interest" description="Required for interaction with FBXO42" evidence="1">
    <location>
        <begin position="113"/>
        <end position="236"/>
    </location>
</feature>
<feature type="region of interest" description="Interaction with AXIN1" evidence="1">
    <location>
        <begin position="116"/>
        <end position="292"/>
    </location>
</feature>
<feature type="region of interest" description="Interaction with E4F1" evidence="1">
    <location>
        <begin position="256"/>
        <end position="294"/>
    </location>
</feature>
<feature type="region of interest" description="Interaction with DNA" evidence="1">
    <location>
        <begin position="273"/>
        <end position="280"/>
    </location>
</feature>
<feature type="region of interest" description="Disordered" evidence="5">
    <location>
        <begin position="283"/>
        <end position="325"/>
    </location>
</feature>
<feature type="region of interest" description="Interaction with CARM1" evidence="1">
    <location>
        <begin position="300"/>
        <end position="393"/>
    </location>
</feature>
<feature type="region of interest" description="Interaction with HIPK2" evidence="1">
    <location>
        <begin position="319"/>
        <end position="360"/>
    </location>
</feature>
<feature type="region of interest" description="Oligomerization">
    <location>
        <begin position="325"/>
        <end position="356"/>
    </location>
</feature>
<feature type="region of interest" description="Disordered" evidence="5">
    <location>
        <begin position="352"/>
        <end position="393"/>
    </location>
</feature>
<feature type="region of interest" description="Interaction with USP7" evidence="1">
    <location>
        <begin position="359"/>
        <end position="363"/>
    </location>
</feature>
<feature type="region of interest" description="Basic (repression of DNA-binding)">
    <location>
        <begin position="368"/>
        <end position="387"/>
    </location>
</feature>
<feature type="short sequence motif" description="Bipartite nuclear localization signal" evidence="1">
    <location>
        <begin position="305"/>
        <end position="321"/>
    </location>
</feature>
<feature type="short sequence motif" description="Nuclear export signal" evidence="1">
    <location>
        <begin position="339"/>
        <end position="350"/>
    </location>
</feature>
<feature type="short sequence motif" description="[KR]-[STA]-K motif">
    <location>
        <begin position="370"/>
        <end position="372"/>
    </location>
</feature>
<feature type="compositionally biased region" description="Pro residues" evidence="5">
    <location>
        <begin position="72"/>
        <end position="90"/>
    </location>
</feature>
<feature type="compositionally biased region" description="Basic and acidic residues" evidence="5">
    <location>
        <begin position="283"/>
        <end position="295"/>
    </location>
</feature>
<feature type="compositionally biased region" description="Basic residues" evidence="5">
    <location>
        <begin position="365"/>
        <end position="384"/>
    </location>
</feature>
<feature type="binding site" evidence="3">
    <location>
        <position position="176"/>
    </location>
    <ligand>
        <name>Zn(2+)</name>
        <dbReference type="ChEBI" id="CHEBI:29105"/>
    </ligand>
</feature>
<feature type="binding site" evidence="3">
    <location>
        <position position="179"/>
    </location>
    <ligand>
        <name>Zn(2+)</name>
        <dbReference type="ChEBI" id="CHEBI:29105"/>
    </ligand>
</feature>
<feature type="binding site" evidence="3">
    <location>
        <position position="238"/>
    </location>
    <ligand>
        <name>Zn(2+)</name>
        <dbReference type="ChEBI" id="CHEBI:29105"/>
    </ligand>
</feature>
<feature type="binding site" evidence="3">
    <location>
        <position position="242"/>
    </location>
    <ligand>
        <name>Zn(2+)</name>
        <dbReference type="ChEBI" id="CHEBI:29105"/>
    </ligand>
</feature>
<feature type="site" description="Interaction with DNA" evidence="3">
    <location>
        <position position="120"/>
    </location>
</feature>
<feature type="modified residue" description="Phosphoserine; by HIPK4" evidence="3">
    <location>
        <position position="9"/>
    </location>
</feature>
<feature type="modified residue" description="Phosphoserine; by CDK5, PRPK, AMPK, NUAK1 and ATM" evidence="3">
    <location>
        <position position="15"/>
    </location>
</feature>
<feature type="modified residue" description="Phosphothreonine; by CK1, VRK1 and VRK2" evidence="3">
    <location>
        <position position="18"/>
    </location>
</feature>
<feature type="modified residue" description="Phosphoserine; by CHEK2, CK1 and PLK3" evidence="3">
    <location>
        <position position="20"/>
    </location>
</feature>
<feature type="modified residue" description="Phosphoserine; by CDK5 and CDK7" evidence="3">
    <location>
        <position position="33"/>
    </location>
</feature>
<feature type="modified residue" description="Phosphoserine; by MAPKAPK5" evidence="3">
    <location>
        <position position="37"/>
    </location>
</feature>
<feature type="modified residue" description="Phosphoserine; by CDK5, DYRK2, HIPK2 and PKC/PRKCG" evidence="3">
    <location>
        <position position="46"/>
    </location>
</feature>
<feature type="modified residue" description="Phosphothreonine; by TAF1" evidence="1">
    <location>
        <position position="55"/>
    </location>
</feature>
<feature type="modified residue" description="Phosphothreonine; by TAF1 and GRK5" evidence="1">
    <location>
        <position position="55"/>
    </location>
</feature>
<feature type="modified residue" description="N6-acetyllysine" evidence="3">
    <location>
        <position position="120"/>
    </location>
</feature>
<feature type="modified residue" description="N6-lactoyllysine" evidence="3">
    <location>
        <position position="120"/>
    </location>
</feature>
<feature type="modified residue" description="N6-lactoyllysine" evidence="3">
    <location>
        <position position="139"/>
    </location>
</feature>
<feature type="modified residue" description="Phosphoserine; by AURKB" evidence="3">
    <location>
        <position position="183"/>
    </location>
</feature>
<feature type="modified residue" description="Phosphoserine; by AURKB" evidence="3">
    <location>
        <position position="269"/>
    </location>
</feature>
<feature type="modified residue" description="Phosphothreonine; by AURKB" evidence="3">
    <location>
        <position position="284"/>
    </location>
</feature>
<feature type="modified residue" description="N6-acetyllysine" evidence="3">
    <location>
        <position position="305"/>
    </location>
</feature>
<feature type="modified residue" description="Phosphoserine; by AURKA, CDK1 and CDK2" evidence="3">
    <location>
        <position position="315"/>
    </location>
</feature>
<feature type="modified residue" description="N6-acetyllysine" evidence="2">
    <location>
        <position position="321"/>
    </location>
</feature>
<feature type="modified residue" description="Omega-N-methylarginine" evidence="3">
    <location>
        <position position="333"/>
    </location>
</feature>
<feature type="modified residue" description="Symmetric dimethylarginine" evidence="3">
    <location>
        <position position="335"/>
    </location>
</feature>
<feature type="modified residue" description="Symmetric dimethylarginine" evidence="3">
    <location>
        <position position="337"/>
    </location>
</feature>
<feature type="modified residue" description="N6,N6-dimethyllysine; alternate" evidence="3">
    <location>
        <position position="370"/>
    </location>
</feature>
<feature type="modified residue" description="N6-methyllysine; by SMYD2; alternate" evidence="3">
    <location>
        <position position="370"/>
    </location>
</feature>
<feature type="modified residue" description="N6-methyllysine; by SETD7" evidence="3">
    <location>
        <position position="372"/>
    </location>
</feature>
<feature type="modified residue" description="N6,N6-dimethyllysine; by EHMT1 and EHMT2; alternate" evidence="3">
    <location>
        <position position="373"/>
    </location>
</feature>
<feature type="modified residue" description="N6-acetyllysine; alternate" evidence="3">
    <location>
        <position position="373"/>
    </location>
</feature>
<feature type="modified residue" description="N6-acetyllysine" evidence="3">
    <location>
        <position position="381"/>
    </location>
</feature>
<feature type="modified residue" description="N6,N6-dimethyllysine; alternate" evidence="3">
    <location>
        <position position="382"/>
    </location>
</feature>
<feature type="modified residue" description="N6-acetyllysine; alternate" evidence="3">
    <location>
        <position position="382"/>
    </location>
</feature>
<feature type="modified residue" description="N6-methyllysine; by KMT5A; alternate" evidence="3">
    <location>
        <position position="382"/>
    </location>
</feature>
<feature type="modified residue" description="Phosphoserine; by CK2, CDK2 and NUAK1" evidence="3">
    <location>
        <position position="392"/>
    </location>
</feature>
<feature type="cross-link" description="Glycyl lysine isopeptide (Lys-Gly) (interchain with G-Cter in ubiquitin)" evidence="3">
    <location>
        <position position="24"/>
    </location>
</feature>
<feature type="cross-link" description="Glycyl lysine isopeptide (Lys-Gly) (interchain with G-Cter in ubiquitin)" evidence="3">
    <location>
        <position position="291"/>
    </location>
</feature>
<feature type="cross-link" description="Glycyl lysine isopeptide (Lys-Gly) (interchain with G-Cter in ubiquitin)" evidence="3">
    <location>
        <position position="292"/>
    </location>
</feature>
<feature type="cross-link" description="Glycyl lysine isopeptide (Lys-Gly) (interchain with G-Cter in ubiquitin)" evidence="3">
    <location>
        <position position="351"/>
    </location>
</feature>
<feature type="cross-link" description="Glycyl lysine isopeptide (Lys-Gly) (interchain with G-Cter in ubiquitin)" evidence="3">
    <location>
        <position position="357"/>
    </location>
</feature>
<feature type="cross-link" description="Glycyl lysine isopeptide (Lys-Gly) (interchain with G-Cter in SUMO)" evidence="1">
    <location>
        <position position="386"/>
    </location>
</feature>
<sequence>MEEPQSDPSIEPPLSQETFSDLWKLLPENNVLSPLPSQAVDDLMLSPDDLAQWLTEDPGPDEAPRMSEAAPPMAPTPAAPTPAAPAPAPSWPLSSSVPSQKTYHGSYGFRLGFLHSGTAKSVTCTYSPDLNKMFCQLAKTCPVQLWVDSTPPPGSRVRAMAIYKQSQHMTEVVRRCPHHERCSDSDGLAPPQHLIRVEGNLRVEYSDDRNTFRHSVVVPYEPPEVGSDCTTIHYNYMCNSSCMGGMNRRPILTIITLEDSSGNLLGRNSFEVRVCACPGRDRRTEEENFRKKGEPCHQLPPGSTKRALPNNTSSSPQPKKKPLDGEYFTLQIRGRERFEMFRELNEALELKDAQAGKEPAGSRAHSSHLKSKKGQSTSRHKKFMFKTEGPDSD</sequence>
<accession>P56424</accession>
<reference key="1">
    <citation type="journal article" date="1994" name="Gene">
        <title>Sequence of a cDNA encoding the p53 protein in rhesus monkey (Macaca mulatta).</title>
        <authorList>
            <person name="Kay H.D."/>
            <person name="Mountjoy C.P."/>
            <person name="Wu G."/>
            <person name="Cornish K.G."/>
            <person name="Smith L.J."/>
        </authorList>
    </citation>
    <scope>NUCLEOTIDE SEQUENCE [MRNA]</scope>
    <source>
        <tissue>Blood</tissue>
    </source>
</reference>
<reference key="2">
    <citation type="submission" date="1996-02" db="EMBL/GenBank/DDBJ databases">
        <authorList>
            <person name="Khan M.A."/>
            <person name="Hansen C."/>
            <person name="Welsh J.A."/>
            <person name="Bennett W.P."/>
        </authorList>
    </citation>
    <scope>NUCLEOTIDE SEQUENCE [GENOMIC DNA]</scope>
</reference>
<dbReference type="EMBL" id="L20442">
    <property type="protein sequence ID" value="AAA17994.1"/>
    <property type="molecule type" value="mRNA"/>
</dbReference>
<dbReference type="EMBL" id="U48956">
    <property type="protein sequence ID" value="AAB91534.1"/>
    <property type="molecule type" value="Genomic_DNA"/>
</dbReference>
<dbReference type="RefSeq" id="NP_001040616.1">
    <property type="nucleotide sequence ID" value="NM_001047151.2"/>
</dbReference>
<dbReference type="RefSeq" id="XP_028691546.1">
    <property type="nucleotide sequence ID" value="XM_028835713.1"/>
</dbReference>
<dbReference type="BMRB" id="P56424"/>
<dbReference type="SMR" id="P56424"/>
<dbReference type="FunCoup" id="P56424">
    <property type="interactions" value="3107"/>
</dbReference>
<dbReference type="STRING" id="9544.ENSMMUP00000011334"/>
<dbReference type="PaxDb" id="9544-ENSMMUP00000035274"/>
<dbReference type="GeneID" id="716170"/>
<dbReference type="KEGG" id="mcc:716170"/>
<dbReference type="CTD" id="7157"/>
<dbReference type="eggNOG" id="ENOG502QVY3">
    <property type="taxonomic scope" value="Eukaryota"/>
</dbReference>
<dbReference type="HOGENOM" id="CLU_019621_0_0_1"/>
<dbReference type="InParanoid" id="P56424"/>
<dbReference type="OrthoDB" id="5915660at2759"/>
<dbReference type="TreeFam" id="TF106101"/>
<dbReference type="Proteomes" id="UP000006718">
    <property type="component" value="Unassembled WGS sequence"/>
</dbReference>
<dbReference type="GO" id="GO:0005813">
    <property type="term" value="C:centrosome"/>
    <property type="evidence" value="ECO:0000250"/>
    <property type="project" value="UniProtKB"/>
</dbReference>
<dbReference type="GO" id="GO:0005737">
    <property type="term" value="C:cytoplasm"/>
    <property type="evidence" value="ECO:0000250"/>
    <property type="project" value="UniProtKB"/>
</dbReference>
<dbReference type="GO" id="GO:0005783">
    <property type="term" value="C:endoplasmic reticulum"/>
    <property type="evidence" value="ECO:0007669"/>
    <property type="project" value="UniProtKB-SubCell"/>
</dbReference>
<dbReference type="GO" id="GO:0005759">
    <property type="term" value="C:mitochondrial matrix"/>
    <property type="evidence" value="ECO:0007669"/>
    <property type="project" value="UniProtKB-SubCell"/>
</dbReference>
<dbReference type="GO" id="GO:0005739">
    <property type="term" value="C:mitochondrion"/>
    <property type="evidence" value="ECO:0000250"/>
    <property type="project" value="UniProtKB"/>
</dbReference>
<dbReference type="GO" id="GO:0005730">
    <property type="term" value="C:nucleolus"/>
    <property type="evidence" value="ECO:0000250"/>
    <property type="project" value="UniProtKB"/>
</dbReference>
<dbReference type="GO" id="GO:0005634">
    <property type="term" value="C:nucleus"/>
    <property type="evidence" value="ECO:0000250"/>
    <property type="project" value="UniProtKB"/>
</dbReference>
<dbReference type="GO" id="GO:0016605">
    <property type="term" value="C:PML body"/>
    <property type="evidence" value="ECO:0007669"/>
    <property type="project" value="UniProtKB-SubCell"/>
</dbReference>
<dbReference type="GO" id="GO:0036310">
    <property type="term" value="F:ATP-dependent DNA/DNA annealing activity"/>
    <property type="evidence" value="ECO:0000250"/>
    <property type="project" value="UniProtKB"/>
</dbReference>
<dbReference type="GO" id="GO:0005507">
    <property type="term" value="F:copper ion binding"/>
    <property type="evidence" value="ECO:0000250"/>
    <property type="project" value="UniProtKB"/>
</dbReference>
<dbReference type="GO" id="GO:0003677">
    <property type="term" value="F:DNA binding"/>
    <property type="evidence" value="ECO:0000250"/>
    <property type="project" value="UniProtKB"/>
</dbReference>
<dbReference type="GO" id="GO:0000981">
    <property type="term" value="F:DNA-binding transcription factor activity, RNA polymerase II-specific"/>
    <property type="evidence" value="ECO:0000250"/>
    <property type="project" value="UniProtKB"/>
</dbReference>
<dbReference type="GO" id="GO:0140693">
    <property type="term" value="F:molecular condensate scaffold activity"/>
    <property type="evidence" value="ECO:0000250"/>
    <property type="project" value="UniProtKB"/>
</dbReference>
<dbReference type="GO" id="GO:1990841">
    <property type="term" value="F:promoter-specific chromatin binding"/>
    <property type="evidence" value="ECO:0000250"/>
    <property type="project" value="UniProtKB"/>
</dbReference>
<dbReference type="GO" id="GO:0000978">
    <property type="term" value="F:RNA polymerase II cis-regulatory region sequence-specific DNA binding"/>
    <property type="evidence" value="ECO:0000250"/>
    <property type="project" value="UniProtKB"/>
</dbReference>
<dbReference type="GO" id="GO:0090398">
    <property type="term" value="P:cellular senescence"/>
    <property type="evidence" value="ECO:0000250"/>
    <property type="project" value="UniProtKB"/>
</dbReference>
<dbReference type="GO" id="GO:0048512">
    <property type="term" value="P:circadian behavior"/>
    <property type="evidence" value="ECO:0000250"/>
    <property type="project" value="UniProtKB"/>
</dbReference>
<dbReference type="GO" id="GO:0006974">
    <property type="term" value="P:DNA damage response"/>
    <property type="evidence" value="ECO:0000250"/>
    <property type="project" value="UniProtKB"/>
</dbReference>
<dbReference type="GO" id="GO:0043153">
    <property type="term" value="P:entrainment of circadian clock by photoperiod"/>
    <property type="evidence" value="ECO:0000250"/>
    <property type="project" value="UniProtKB"/>
</dbReference>
<dbReference type="GO" id="GO:0030308">
    <property type="term" value="P:negative regulation of cell growth"/>
    <property type="evidence" value="ECO:0000250"/>
    <property type="project" value="UniProtKB"/>
</dbReference>
<dbReference type="GO" id="GO:0045892">
    <property type="term" value="P:negative regulation of DNA-templated transcription"/>
    <property type="evidence" value="ECO:0000250"/>
    <property type="project" value="UniProtKB"/>
</dbReference>
<dbReference type="GO" id="GO:0006289">
    <property type="term" value="P:nucleotide-excision repair"/>
    <property type="evidence" value="ECO:0000250"/>
    <property type="project" value="UniProtKB"/>
</dbReference>
<dbReference type="GO" id="GO:0097252">
    <property type="term" value="P:oligodendrocyte apoptotic process"/>
    <property type="evidence" value="ECO:0000250"/>
    <property type="project" value="UniProtKB"/>
</dbReference>
<dbReference type="GO" id="GO:0043065">
    <property type="term" value="P:positive regulation of apoptotic process"/>
    <property type="evidence" value="ECO:0000250"/>
    <property type="project" value="UniProtKB"/>
</dbReference>
<dbReference type="GO" id="GO:2001244">
    <property type="term" value="P:positive regulation of intrinsic apoptotic signaling pathway"/>
    <property type="evidence" value="ECO:0000250"/>
    <property type="project" value="UniProtKB"/>
</dbReference>
<dbReference type="GO" id="GO:0045944">
    <property type="term" value="P:positive regulation of transcription by RNA polymerase II"/>
    <property type="evidence" value="ECO:0000250"/>
    <property type="project" value="UniProtKB"/>
</dbReference>
<dbReference type="GO" id="GO:0051262">
    <property type="term" value="P:protein tetramerization"/>
    <property type="evidence" value="ECO:0007669"/>
    <property type="project" value="InterPro"/>
</dbReference>
<dbReference type="GO" id="GO:0006357">
    <property type="term" value="P:regulation of transcription by RNA polymerase II"/>
    <property type="evidence" value="ECO:0000318"/>
    <property type="project" value="GO_Central"/>
</dbReference>
<dbReference type="CDD" id="cd08367">
    <property type="entry name" value="P53"/>
    <property type="match status" value="1"/>
</dbReference>
<dbReference type="FunFam" id="2.60.40.720:FF:000003">
    <property type="entry name" value="Cellular tumor antigen p53"/>
    <property type="match status" value="1"/>
</dbReference>
<dbReference type="FunFam" id="4.10.170.10:FF:000003">
    <property type="entry name" value="Cellular tumor antigen p53"/>
    <property type="match status" value="1"/>
</dbReference>
<dbReference type="Gene3D" id="2.60.40.720">
    <property type="match status" value="1"/>
</dbReference>
<dbReference type="Gene3D" id="6.10.50.20">
    <property type="match status" value="1"/>
</dbReference>
<dbReference type="Gene3D" id="4.10.170.10">
    <property type="entry name" value="p53-like tetramerisation domain"/>
    <property type="match status" value="1"/>
</dbReference>
<dbReference type="InterPro" id="IPR008967">
    <property type="entry name" value="p53-like_TF_DNA-bd_sf"/>
</dbReference>
<dbReference type="InterPro" id="IPR012346">
    <property type="entry name" value="p53/RUNT-type_TF_DNA-bd_sf"/>
</dbReference>
<dbReference type="InterPro" id="IPR011615">
    <property type="entry name" value="p53_DNA-bd"/>
</dbReference>
<dbReference type="InterPro" id="IPR040926">
    <property type="entry name" value="p53_TAD2"/>
</dbReference>
<dbReference type="InterPro" id="IPR036674">
    <property type="entry name" value="p53_tetramer_sf"/>
</dbReference>
<dbReference type="InterPro" id="IPR010991">
    <property type="entry name" value="p53_tetrameristn"/>
</dbReference>
<dbReference type="InterPro" id="IPR013872">
    <property type="entry name" value="p53_transactivation_domain"/>
</dbReference>
<dbReference type="InterPro" id="IPR002117">
    <property type="entry name" value="p53_tumour_suppressor"/>
</dbReference>
<dbReference type="PANTHER" id="PTHR11447">
    <property type="entry name" value="CELLULAR TUMOR ANTIGEN P53"/>
    <property type="match status" value="1"/>
</dbReference>
<dbReference type="PANTHER" id="PTHR11447:SF6">
    <property type="entry name" value="CELLULAR TUMOR ANTIGEN P53"/>
    <property type="match status" value="1"/>
</dbReference>
<dbReference type="Pfam" id="PF00870">
    <property type="entry name" value="P53"/>
    <property type="match status" value="1"/>
</dbReference>
<dbReference type="Pfam" id="PF08563">
    <property type="entry name" value="P53_TAD"/>
    <property type="match status" value="1"/>
</dbReference>
<dbReference type="Pfam" id="PF07710">
    <property type="entry name" value="P53_tetramer"/>
    <property type="match status" value="1"/>
</dbReference>
<dbReference type="Pfam" id="PF18521">
    <property type="entry name" value="TAD2"/>
    <property type="match status" value="1"/>
</dbReference>
<dbReference type="PRINTS" id="PR00386">
    <property type="entry name" value="P53SUPPRESSR"/>
</dbReference>
<dbReference type="SUPFAM" id="SSF47719">
    <property type="entry name" value="p53 tetramerization domain"/>
    <property type="match status" value="1"/>
</dbReference>
<dbReference type="SUPFAM" id="SSF49417">
    <property type="entry name" value="p53-like transcription factors"/>
    <property type="match status" value="1"/>
</dbReference>
<dbReference type="PROSITE" id="PS00348">
    <property type="entry name" value="P53"/>
    <property type="match status" value="1"/>
</dbReference>